<dbReference type="EMBL" id="CP000681">
    <property type="protein sequence ID" value="ABP75216.1"/>
    <property type="molecule type" value="Genomic_DNA"/>
</dbReference>
<dbReference type="SMR" id="A4Y5I3"/>
<dbReference type="STRING" id="319224.Sputcn32_1491"/>
<dbReference type="KEGG" id="spc:Sputcn32_1491"/>
<dbReference type="eggNOG" id="COG1219">
    <property type="taxonomic scope" value="Bacteria"/>
</dbReference>
<dbReference type="HOGENOM" id="CLU_014218_8_2_6"/>
<dbReference type="GO" id="GO:0009376">
    <property type="term" value="C:HslUV protease complex"/>
    <property type="evidence" value="ECO:0007669"/>
    <property type="project" value="TreeGrafter"/>
</dbReference>
<dbReference type="GO" id="GO:0005524">
    <property type="term" value="F:ATP binding"/>
    <property type="evidence" value="ECO:0007669"/>
    <property type="project" value="UniProtKB-UniRule"/>
</dbReference>
<dbReference type="GO" id="GO:0016887">
    <property type="term" value="F:ATP hydrolysis activity"/>
    <property type="evidence" value="ECO:0007669"/>
    <property type="project" value="InterPro"/>
</dbReference>
<dbReference type="GO" id="GO:0140662">
    <property type="term" value="F:ATP-dependent protein folding chaperone"/>
    <property type="evidence" value="ECO:0007669"/>
    <property type="project" value="InterPro"/>
</dbReference>
<dbReference type="GO" id="GO:0046983">
    <property type="term" value="F:protein dimerization activity"/>
    <property type="evidence" value="ECO:0007669"/>
    <property type="project" value="InterPro"/>
</dbReference>
<dbReference type="GO" id="GO:0051082">
    <property type="term" value="F:unfolded protein binding"/>
    <property type="evidence" value="ECO:0007669"/>
    <property type="project" value="UniProtKB-UniRule"/>
</dbReference>
<dbReference type="GO" id="GO:0008270">
    <property type="term" value="F:zinc ion binding"/>
    <property type="evidence" value="ECO:0007669"/>
    <property type="project" value="InterPro"/>
</dbReference>
<dbReference type="GO" id="GO:0051301">
    <property type="term" value="P:cell division"/>
    <property type="evidence" value="ECO:0007669"/>
    <property type="project" value="TreeGrafter"/>
</dbReference>
<dbReference type="GO" id="GO:0051603">
    <property type="term" value="P:proteolysis involved in protein catabolic process"/>
    <property type="evidence" value="ECO:0007669"/>
    <property type="project" value="TreeGrafter"/>
</dbReference>
<dbReference type="CDD" id="cd19497">
    <property type="entry name" value="RecA-like_ClpX"/>
    <property type="match status" value="1"/>
</dbReference>
<dbReference type="FunFam" id="1.10.8.60:FF:000002">
    <property type="entry name" value="ATP-dependent Clp protease ATP-binding subunit ClpX"/>
    <property type="match status" value="1"/>
</dbReference>
<dbReference type="FunFam" id="3.40.50.300:FF:000005">
    <property type="entry name" value="ATP-dependent Clp protease ATP-binding subunit ClpX"/>
    <property type="match status" value="1"/>
</dbReference>
<dbReference type="Gene3D" id="1.10.8.60">
    <property type="match status" value="1"/>
</dbReference>
<dbReference type="Gene3D" id="6.20.220.10">
    <property type="entry name" value="ClpX chaperone, C4-type zinc finger domain"/>
    <property type="match status" value="1"/>
</dbReference>
<dbReference type="Gene3D" id="3.40.50.300">
    <property type="entry name" value="P-loop containing nucleotide triphosphate hydrolases"/>
    <property type="match status" value="1"/>
</dbReference>
<dbReference type="HAMAP" id="MF_00175">
    <property type="entry name" value="ClpX"/>
    <property type="match status" value="1"/>
</dbReference>
<dbReference type="InterPro" id="IPR003593">
    <property type="entry name" value="AAA+_ATPase"/>
</dbReference>
<dbReference type="InterPro" id="IPR050052">
    <property type="entry name" value="ATP-dep_Clp_protease_ClpX"/>
</dbReference>
<dbReference type="InterPro" id="IPR003959">
    <property type="entry name" value="ATPase_AAA_core"/>
</dbReference>
<dbReference type="InterPro" id="IPR019489">
    <property type="entry name" value="Clp_ATPase_C"/>
</dbReference>
<dbReference type="InterPro" id="IPR004487">
    <property type="entry name" value="Clp_protease_ATP-bd_su_ClpX"/>
</dbReference>
<dbReference type="InterPro" id="IPR046425">
    <property type="entry name" value="ClpX_bact"/>
</dbReference>
<dbReference type="InterPro" id="IPR027417">
    <property type="entry name" value="P-loop_NTPase"/>
</dbReference>
<dbReference type="InterPro" id="IPR010603">
    <property type="entry name" value="Znf_CppX_C4"/>
</dbReference>
<dbReference type="InterPro" id="IPR038366">
    <property type="entry name" value="Znf_CppX_C4_sf"/>
</dbReference>
<dbReference type="NCBIfam" id="TIGR00382">
    <property type="entry name" value="clpX"/>
    <property type="match status" value="1"/>
</dbReference>
<dbReference type="NCBIfam" id="NF003745">
    <property type="entry name" value="PRK05342.1"/>
    <property type="match status" value="1"/>
</dbReference>
<dbReference type="PANTHER" id="PTHR48102:SF7">
    <property type="entry name" value="ATP-DEPENDENT CLP PROTEASE ATP-BINDING SUBUNIT CLPX-LIKE, MITOCHONDRIAL"/>
    <property type="match status" value="1"/>
</dbReference>
<dbReference type="PANTHER" id="PTHR48102">
    <property type="entry name" value="ATP-DEPENDENT CLP PROTEASE ATP-BINDING SUBUNIT CLPX-LIKE, MITOCHONDRIAL-RELATED"/>
    <property type="match status" value="1"/>
</dbReference>
<dbReference type="Pfam" id="PF07724">
    <property type="entry name" value="AAA_2"/>
    <property type="match status" value="1"/>
</dbReference>
<dbReference type="Pfam" id="PF10431">
    <property type="entry name" value="ClpB_D2-small"/>
    <property type="match status" value="1"/>
</dbReference>
<dbReference type="Pfam" id="PF06689">
    <property type="entry name" value="zf-C4_ClpX"/>
    <property type="match status" value="1"/>
</dbReference>
<dbReference type="SMART" id="SM00382">
    <property type="entry name" value="AAA"/>
    <property type="match status" value="1"/>
</dbReference>
<dbReference type="SMART" id="SM01086">
    <property type="entry name" value="ClpB_D2-small"/>
    <property type="match status" value="1"/>
</dbReference>
<dbReference type="SMART" id="SM00994">
    <property type="entry name" value="zf-C4_ClpX"/>
    <property type="match status" value="1"/>
</dbReference>
<dbReference type="SUPFAM" id="SSF57716">
    <property type="entry name" value="Glucocorticoid receptor-like (DNA-binding domain)"/>
    <property type="match status" value="1"/>
</dbReference>
<dbReference type="SUPFAM" id="SSF52540">
    <property type="entry name" value="P-loop containing nucleoside triphosphate hydrolases"/>
    <property type="match status" value="1"/>
</dbReference>
<dbReference type="PROSITE" id="PS51902">
    <property type="entry name" value="CLPX_ZB"/>
    <property type="match status" value="1"/>
</dbReference>
<reference key="1">
    <citation type="submission" date="2007-04" db="EMBL/GenBank/DDBJ databases">
        <title>Complete sequence of Shewanella putrefaciens CN-32.</title>
        <authorList>
            <consortium name="US DOE Joint Genome Institute"/>
            <person name="Copeland A."/>
            <person name="Lucas S."/>
            <person name="Lapidus A."/>
            <person name="Barry K."/>
            <person name="Detter J.C."/>
            <person name="Glavina del Rio T."/>
            <person name="Hammon N."/>
            <person name="Israni S."/>
            <person name="Dalin E."/>
            <person name="Tice H."/>
            <person name="Pitluck S."/>
            <person name="Chain P."/>
            <person name="Malfatti S."/>
            <person name="Shin M."/>
            <person name="Vergez L."/>
            <person name="Schmutz J."/>
            <person name="Larimer F."/>
            <person name="Land M."/>
            <person name="Hauser L."/>
            <person name="Kyrpides N."/>
            <person name="Mikhailova N."/>
            <person name="Romine M.F."/>
            <person name="Fredrickson J."/>
            <person name="Tiedje J."/>
            <person name="Richardson P."/>
        </authorList>
    </citation>
    <scope>NUCLEOTIDE SEQUENCE [LARGE SCALE GENOMIC DNA]</scope>
    <source>
        <strain>CN-32 / ATCC BAA-453</strain>
    </source>
</reference>
<evidence type="ECO:0000255" key="1">
    <source>
        <dbReference type="HAMAP-Rule" id="MF_00175"/>
    </source>
</evidence>
<evidence type="ECO:0000255" key="2">
    <source>
        <dbReference type="PROSITE-ProRule" id="PRU01250"/>
    </source>
</evidence>
<organism>
    <name type="scientific">Shewanella putrefaciens (strain CN-32 / ATCC BAA-453)</name>
    <dbReference type="NCBI Taxonomy" id="319224"/>
    <lineage>
        <taxon>Bacteria</taxon>
        <taxon>Pseudomonadati</taxon>
        <taxon>Pseudomonadota</taxon>
        <taxon>Gammaproteobacteria</taxon>
        <taxon>Alteromonadales</taxon>
        <taxon>Shewanellaceae</taxon>
        <taxon>Shewanella</taxon>
    </lineage>
</organism>
<name>CLPX_SHEPC</name>
<proteinExistence type="inferred from homology"/>
<gene>
    <name evidence="1" type="primary">clpX</name>
    <name type="ordered locus">Sputcn32_1491</name>
</gene>
<protein>
    <recommendedName>
        <fullName evidence="1">ATP-dependent Clp protease ATP-binding subunit ClpX</fullName>
    </recommendedName>
</protein>
<feature type="chain" id="PRO_1000024655" description="ATP-dependent Clp protease ATP-binding subunit ClpX">
    <location>
        <begin position="1"/>
        <end position="426"/>
    </location>
</feature>
<feature type="domain" description="ClpX-type ZB" evidence="2">
    <location>
        <begin position="4"/>
        <end position="57"/>
    </location>
</feature>
<feature type="binding site" evidence="2">
    <location>
        <position position="16"/>
    </location>
    <ligand>
        <name>Zn(2+)</name>
        <dbReference type="ChEBI" id="CHEBI:29105"/>
    </ligand>
</feature>
<feature type="binding site" evidence="2">
    <location>
        <position position="19"/>
    </location>
    <ligand>
        <name>Zn(2+)</name>
        <dbReference type="ChEBI" id="CHEBI:29105"/>
    </ligand>
</feature>
<feature type="binding site" evidence="2">
    <location>
        <position position="38"/>
    </location>
    <ligand>
        <name>Zn(2+)</name>
        <dbReference type="ChEBI" id="CHEBI:29105"/>
    </ligand>
</feature>
<feature type="binding site" evidence="2">
    <location>
        <position position="41"/>
    </location>
    <ligand>
        <name>Zn(2+)</name>
        <dbReference type="ChEBI" id="CHEBI:29105"/>
    </ligand>
</feature>
<feature type="binding site" evidence="1">
    <location>
        <begin position="121"/>
        <end position="128"/>
    </location>
    <ligand>
        <name>ATP</name>
        <dbReference type="ChEBI" id="CHEBI:30616"/>
    </ligand>
</feature>
<comment type="function">
    <text evidence="1">ATP-dependent specificity component of the Clp protease. It directs the protease to specific substrates. Can perform chaperone functions in the absence of ClpP.</text>
</comment>
<comment type="subunit">
    <text evidence="1">Component of the ClpX-ClpP complex. Forms a hexameric ring that, in the presence of ATP, binds to fourteen ClpP subunits assembled into a disk-like structure with a central cavity, resembling the structure of eukaryotic proteasomes.</text>
</comment>
<comment type="similarity">
    <text evidence="1">Belongs to the ClpX chaperone family.</text>
</comment>
<sequence>MGDNKNNGDSGKLLYCSFCGKSQHEVRKLIAGPSVYVCDECVELCNDIIREEIKEISPKRDSDKLPTPHELRAHLDDYVIGQDRAKKVLSVAVYNHYKRLKNSSPKDGVELGKSNILLIGPTGSGKTLLAETLARSLNVPFTMADATTLTEAGYVGEDVENIIQKLLQKCDYDVEKAQRGIVYIDEIDKISRKSDNPSITRDVSGEGVQQALLKLIEGTVAAVPPQGGRKHPQQEFLQVDTSKILFICGGAFAGLEKVIEQRAHVGSGIGFGAQVKGEKDKATISETLSQVEPGDLVKYGLIPEFIGRLPVVATLTELDEEALVQILSQPKNALTKQYSALFEMEGVELEFREDALKAIAHKAMSRKTGARGLRSIVESILLDTMYDIPSVDGVVKAVVDESVVNGESAPILIYEHNETQAASGEQ</sequence>
<accession>A4Y5I3</accession>
<keyword id="KW-0067">ATP-binding</keyword>
<keyword id="KW-0143">Chaperone</keyword>
<keyword id="KW-0479">Metal-binding</keyword>
<keyword id="KW-0547">Nucleotide-binding</keyword>
<keyword id="KW-0862">Zinc</keyword>